<organism>
    <name type="scientific">Escherichia coli (strain ATCC 8739 / DSM 1576 / NBRC 3972 / NCIMB 8545 / WDCM 00012 / Crooks)</name>
    <dbReference type="NCBI Taxonomy" id="481805"/>
    <lineage>
        <taxon>Bacteria</taxon>
        <taxon>Pseudomonadati</taxon>
        <taxon>Pseudomonadota</taxon>
        <taxon>Gammaproteobacteria</taxon>
        <taxon>Enterobacterales</taxon>
        <taxon>Enterobacteriaceae</taxon>
        <taxon>Escherichia</taxon>
    </lineage>
</organism>
<comment type="function">
    <text evidence="1">Specifically dimethylates two adjacent adenosines (A1518 and A1519) in the loop of a conserved hairpin near the 3'-end of 16S rRNA in the 30S particle. May play a critical role in biogenesis of 30S subunits.</text>
</comment>
<comment type="catalytic activity">
    <reaction evidence="1">
        <text>adenosine(1518)/adenosine(1519) in 16S rRNA + 4 S-adenosyl-L-methionine = N(6)-dimethyladenosine(1518)/N(6)-dimethyladenosine(1519) in 16S rRNA + 4 S-adenosyl-L-homocysteine + 4 H(+)</text>
        <dbReference type="Rhea" id="RHEA:19609"/>
        <dbReference type="Rhea" id="RHEA-COMP:10232"/>
        <dbReference type="Rhea" id="RHEA-COMP:10233"/>
        <dbReference type="ChEBI" id="CHEBI:15378"/>
        <dbReference type="ChEBI" id="CHEBI:57856"/>
        <dbReference type="ChEBI" id="CHEBI:59789"/>
        <dbReference type="ChEBI" id="CHEBI:74411"/>
        <dbReference type="ChEBI" id="CHEBI:74493"/>
        <dbReference type="EC" id="2.1.1.182"/>
    </reaction>
</comment>
<comment type="subcellular location">
    <subcellularLocation>
        <location evidence="1">Cytoplasm</location>
    </subcellularLocation>
</comment>
<comment type="similarity">
    <text evidence="1">Belongs to the class I-like SAM-binding methyltransferase superfamily. rRNA adenine N(6)-methyltransferase family. RsmA subfamily.</text>
</comment>
<proteinExistence type="inferred from homology"/>
<accession>B1IRC5</accession>
<reference key="1">
    <citation type="submission" date="2008-02" db="EMBL/GenBank/DDBJ databases">
        <title>Complete sequence of Escherichia coli C str. ATCC 8739.</title>
        <authorList>
            <person name="Copeland A."/>
            <person name="Lucas S."/>
            <person name="Lapidus A."/>
            <person name="Glavina del Rio T."/>
            <person name="Dalin E."/>
            <person name="Tice H."/>
            <person name="Bruce D."/>
            <person name="Goodwin L."/>
            <person name="Pitluck S."/>
            <person name="Kiss H."/>
            <person name="Brettin T."/>
            <person name="Detter J.C."/>
            <person name="Han C."/>
            <person name="Kuske C.R."/>
            <person name="Schmutz J."/>
            <person name="Larimer F."/>
            <person name="Land M."/>
            <person name="Hauser L."/>
            <person name="Kyrpides N."/>
            <person name="Mikhailova N."/>
            <person name="Ingram L."/>
            <person name="Richardson P."/>
        </authorList>
    </citation>
    <scope>NUCLEOTIDE SEQUENCE [LARGE SCALE GENOMIC DNA]</scope>
    <source>
        <strain>ATCC 8739 / DSM 1576 / NBRC 3972 / NCIMB 8545 / WDCM 00012 / Crooks</strain>
    </source>
</reference>
<gene>
    <name evidence="1" type="primary">rsmA</name>
    <name evidence="1" type="synonym">ksgA</name>
    <name type="ordered locus">EcolC_3604</name>
</gene>
<keyword id="KW-0963">Cytoplasm</keyword>
<keyword id="KW-0489">Methyltransferase</keyword>
<keyword id="KW-0694">RNA-binding</keyword>
<keyword id="KW-0698">rRNA processing</keyword>
<keyword id="KW-0949">S-adenosyl-L-methionine</keyword>
<keyword id="KW-0808">Transferase</keyword>
<protein>
    <recommendedName>
        <fullName evidence="1">Ribosomal RNA small subunit methyltransferase A</fullName>
        <ecNumber evidence="1">2.1.1.182</ecNumber>
    </recommendedName>
    <alternativeName>
        <fullName evidence="1">16S rRNA (adenine(1518)-N(6)/adenine(1519)-N(6))-dimethyltransferase</fullName>
    </alternativeName>
    <alternativeName>
        <fullName evidence="1">16S rRNA dimethyladenosine transferase</fullName>
    </alternativeName>
    <alternativeName>
        <fullName evidence="1">16S rRNA dimethylase</fullName>
    </alternativeName>
    <alternativeName>
        <fullName evidence="1">S-adenosylmethionine-6-N', N'-adenosyl(rRNA) dimethyltransferase</fullName>
    </alternativeName>
</protein>
<dbReference type="EC" id="2.1.1.182" evidence="1"/>
<dbReference type="EMBL" id="CP000946">
    <property type="protein sequence ID" value="ACA79218.1"/>
    <property type="molecule type" value="Genomic_DNA"/>
</dbReference>
<dbReference type="RefSeq" id="WP_001065381.1">
    <property type="nucleotide sequence ID" value="NZ_MTFT01000035.1"/>
</dbReference>
<dbReference type="SMR" id="B1IRC5"/>
<dbReference type="GeneID" id="93777384"/>
<dbReference type="KEGG" id="ecl:EcolC_3604"/>
<dbReference type="HOGENOM" id="CLU_041220_0_1_6"/>
<dbReference type="GO" id="GO:0005829">
    <property type="term" value="C:cytosol"/>
    <property type="evidence" value="ECO:0007669"/>
    <property type="project" value="TreeGrafter"/>
</dbReference>
<dbReference type="GO" id="GO:0052908">
    <property type="term" value="F:16S rRNA (adenine(1518)-N(6)/adenine(1519)-N(6))-dimethyltransferase activity"/>
    <property type="evidence" value="ECO:0007669"/>
    <property type="project" value="UniProtKB-EC"/>
</dbReference>
<dbReference type="GO" id="GO:0003723">
    <property type="term" value="F:RNA binding"/>
    <property type="evidence" value="ECO:0007669"/>
    <property type="project" value="UniProtKB-KW"/>
</dbReference>
<dbReference type="FunFam" id="1.10.8.100:FF:000001">
    <property type="entry name" value="Ribosomal RNA small subunit methyltransferase A"/>
    <property type="match status" value="1"/>
</dbReference>
<dbReference type="FunFam" id="3.40.50.150:FF:000006">
    <property type="entry name" value="Ribosomal RNA small subunit methyltransferase A"/>
    <property type="match status" value="1"/>
</dbReference>
<dbReference type="Gene3D" id="1.10.8.100">
    <property type="entry name" value="Ribosomal RNA adenine dimethylase-like, domain 2"/>
    <property type="match status" value="1"/>
</dbReference>
<dbReference type="Gene3D" id="3.40.50.150">
    <property type="entry name" value="Vaccinia Virus protein VP39"/>
    <property type="match status" value="1"/>
</dbReference>
<dbReference type="HAMAP" id="MF_00607">
    <property type="entry name" value="16SrRNA_methyltr_A"/>
    <property type="match status" value="1"/>
</dbReference>
<dbReference type="InterPro" id="IPR001737">
    <property type="entry name" value="KsgA/Erm"/>
</dbReference>
<dbReference type="InterPro" id="IPR023165">
    <property type="entry name" value="rRNA_Ade_diMease-like_C"/>
</dbReference>
<dbReference type="InterPro" id="IPR020596">
    <property type="entry name" value="rRNA_Ade_Mease_Trfase_CS"/>
</dbReference>
<dbReference type="InterPro" id="IPR020598">
    <property type="entry name" value="rRNA_Ade_methylase_Trfase_N"/>
</dbReference>
<dbReference type="InterPro" id="IPR011530">
    <property type="entry name" value="rRNA_adenine_dimethylase"/>
</dbReference>
<dbReference type="InterPro" id="IPR029063">
    <property type="entry name" value="SAM-dependent_MTases_sf"/>
</dbReference>
<dbReference type="NCBIfam" id="TIGR00755">
    <property type="entry name" value="ksgA"/>
    <property type="match status" value="1"/>
</dbReference>
<dbReference type="PANTHER" id="PTHR11727">
    <property type="entry name" value="DIMETHYLADENOSINE TRANSFERASE"/>
    <property type="match status" value="1"/>
</dbReference>
<dbReference type="PANTHER" id="PTHR11727:SF7">
    <property type="entry name" value="DIMETHYLADENOSINE TRANSFERASE-RELATED"/>
    <property type="match status" value="1"/>
</dbReference>
<dbReference type="Pfam" id="PF00398">
    <property type="entry name" value="RrnaAD"/>
    <property type="match status" value="1"/>
</dbReference>
<dbReference type="SMART" id="SM00650">
    <property type="entry name" value="rADc"/>
    <property type="match status" value="1"/>
</dbReference>
<dbReference type="SUPFAM" id="SSF53335">
    <property type="entry name" value="S-adenosyl-L-methionine-dependent methyltransferases"/>
    <property type="match status" value="1"/>
</dbReference>
<dbReference type="PROSITE" id="PS01131">
    <property type="entry name" value="RRNA_A_DIMETH"/>
    <property type="match status" value="1"/>
</dbReference>
<dbReference type="PROSITE" id="PS51689">
    <property type="entry name" value="SAM_RNA_A_N6_MT"/>
    <property type="match status" value="1"/>
</dbReference>
<feature type="chain" id="PRO_1000082551" description="Ribosomal RNA small subunit methyltransferase A">
    <location>
        <begin position="1"/>
        <end position="273"/>
    </location>
</feature>
<feature type="binding site" evidence="1">
    <location>
        <position position="18"/>
    </location>
    <ligand>
        <name>S-adenosyl-L-methionine</name>
        <dbReference type="ChEBI" id="CHEBI:59789"/>
    </ligand>
</feature>
<feature type="binding site" evidence="1">
    <location>
        <position position="20"/>
    </location>
    <ligand>
        <name>S-adenosyl-L-methionine</name>
        <dbReference type="ChEBI" id="CHEBI:59789"/>
    </ligand>
</feature>
<feature type="binding site" evidence="1">
    <location>
        <position position="45"/>
    </location>
    <ligand>
        <name>S-adenosyl-L-methionine</name>
        <dbReference type="ChEBI" id="CHEBI:59789"/>
    </ligand>
</feature>
<feature type="binding site" evidence="1">
    <location>
        <position position="66"/>
    </location>
    <ligand>
        <name>S-adenosyl-L-methionine</name>
        <dbReference type="ChEBI" id="CHEBI:59789"/>
    </ligand>
</feature>
<feature type="binding site" evidence="1">
    <location>
        <position position="91"/>
    </location>
    <ligand>
        <name>S-adenosyl-L-methionine</name>
        <dbReference type="ChEBI" id="CHEBI:59789"/>
    </ligand>
</feature>
<feature type="binding site" evidence="1">
    <location>
        <position position="113"/>
    </location>
    <ligand>
        <name>S-adenosyl-L-methionine</name>
        <dbReference type="ChEBI" id="CHEBI:59789"/>
    </ligand>
</feature>
<name>RSMA_ECOLC</name>
<sequence>MNNRVHQGHLARKRFGQNFLNDQFVIDSIVSAINPQKGQAMVEIGPGLAALTEPVGERLDQLTVIELDRDLAARLQTHPFLGPKLTIYQQDAMTFNFGELAEKMGQPLRVFGNLPYNISTPLMFHLFSYTDAIADMHFMLQKEVVNRLVAGPNSKAYGRLSVMAQYYCNVIPVLEVPPSAFTPPPKVDSAVVRLVPHATMPHPVKDVRVLSRITTEAFNQRRKTIRNSLGNLFSVEVLTGMGIDPAMRAENISVAQYCQMANYLAENAPLQES</sequence>
<evidence type="ECO:0000255" key="1">
    <source>
        <dbReference type="HAMAP-Rule" id="MF_00607"/>
    </source>
</evidence>